<keyword id="KW-0496">Mitochondrion</keyword>
<keyword id="KW-1185">Reference proteome</keyword>
<keyword id="KW-0346">Stress response</keyword>
<keyword id="KW-0809">Transit peptide</keyword>
<reference key="1">
    <citation type="journal article" date="2002" name="Nature">
        <title>The genome sequence of Schizosaccharomyces pombe.</title>
        <authorList>
            <person name="Wood V."/>
            <person name="Gwilliam R."/>
            <person name="Rajandream M.A."/>
            <person name="Lyne M.H."/>
            <person name="Lyne R."/>
            <person name="Stewart A."/>
            <person name="Sgouros J.G."/>
            <person name="Peat N."/>
            <person name="Hayles J."/>
            <person name="Baker S.G."/>
            <person name="Basham D."/>
            <person name="Bowman S."/>
            <person name="Brooks K."/>
            <person name="Brown D."/>
            <person name="Brown S."/>
            <person name="Chillingworth T."/>
            <person name="Churcher C.M."/>
            <person name="Collins M."/>
            <person name="Connor R."/>
            <person name="Cronin A."/>
            <person name="Davis P."/>
            <person name="Feltwell T."/>
            <person name="Fraser A."/>
            <person name="Gentles S."/>
            <person name="Goble A."/>
            <person name="Hamlin N."/>
            <person name="Harris D.E."/>
            <person name="Hidalgo J."/>
            <person name="Hodgson G."/>
            <person name="Holroyd S."/>
            <person name="Hornsby T."/>
            <person name="Howarth S."/>
            <person name="Huckle E.J."/>
            <person name="Hunt S."/>
            <person name="Jagels K."/>
            <person name="James K.D."/>
            <person name="Jones L."/>
            <person name="Jones M."/>
            <person name="Leather S."/>
            <person name="McDonald S."/>
            <person name="McLean J."/>
            <person name="Mooney P."/>
            <person name="Moule S."/>
            <person name="Mungall K.L."/>
            <person name="Murphy L.D."/>
            <person name="Niblett D."/>
            <person name="Odell C."/>
            <person name="Oliver K."/>
            <person name="O'Neil S."/>
            <person name="Pearson D."/>
            <person name="Quail M.A."/>
            <person name="Rabbinowitsch E."/>
            <person name="Rutherford K.M."/>
            <person name="Rutter S."/>
            <person name="Saunders D."/>
            <person name="Seeger K."/>
            <person name="Sharp S."/>
            <person name="Skelton J."/>
            <person name="Simmonds M.N."/>
            <person name="Squares R."/>
            <person name="Squares S."/>
            <person name="Stevens K."/>
            <person name="Taylor K."/>
            <person name="Taylor R.G."/>
            <person name="Tivey A."/>
            <person name="Walsh S.V."/>
            <person name="Warren T."/>
            <person name="Whitehead S."/>
            <person name="Woodward J.R."/>
            <person name="Volckaert G."/>
            <person name="Aert R."/>
            <person name="Robben J."/>
            <person name="Grymonprez B."/>
            <person name="Weltjens I."/>
            <person name="Vanstreels E."/>
            <person name="Rieger M."/>
            <person name="Schaefer M."/>
            <person name="Mueller-Auer S."/>
            <person name="Gabel C."/>
            <person name="Fuchs M."/>
            <person name="Duesterhoeft A."/>
            <person name="Fritzc C."/>
            <person name="Holzer E."/>
            <person name="Moestl D."/>
            <person name="Hilbert H."/>
            <person name="Borzym K."/>
            <person name="Langer I."/>
            <person name="Beck A."/>
            <person name="Lehrach H."/>
            <person name="Reinhardt R."/>
            <person name="Pohl T.M."/>
            <person name="Eger P."/>
            <person name="Zimmermann W."/>
            <person name="Wedler H."/>
            <person name="Wambutt R."/>
            <person name="Purnelle B."/>
            <person name="Goffeau A."/>
            <person name="Cadieu E."/>
            <person name="Dreano S."/>
            <person name="Gloux S."/>
            <person name="Lelaure V."/>
            <person name="Mottier S."/>
            <person name="Galibert F."/>
            <person name="Aves S.J."/>
            <person name="Xiang Z."/>
            <person name="Hunt C."/>
            <person name="Moore K."/>
            <person name="Hurst S.M."/>
            <person name="Lucas M."/>
            <person name="Rochet M."/>
            <person name="Gaillardin C."/>
            <person name="Tallada V.A."/>
            <person name="Garzon A."/>
            <person name="Thode G."/>
            <person name="Daga R.R."/>
            <person name="Cruzado L."/>
            <person name="Jimenez J."/>
            <person name="Sanchez M."/>
            <person name="del Rey F."/>
            <person name="Benito J."/>
            <person name="Dominguez A."/>
            <person name="Revuelta J.L."/>
            <person name="Moreno S."/>
            <person name="Armstrong J."/>
            <person name="Forsburg S.L."/>
            <person name="Cerutti L."/>
            <person name="Lowe T."/>
            <person name="McCombie W.R."/>
            <person name="Paulsen I."/>
            <person name="Potashkin J."/>
            <person name="Shpakovski G.V."/>
            <person name="Ussery D."/>
            <person name="Barrell B.G."/>
            <person name="Nurse P."/>
        </authorList>
    </citation>
    <scope>NUCLEOTIDE SEQUENCE [LARGE SCALE GENOMIC DNA]</scope>
    <source>
        <strain>972 / ATCC 24843</strain>
    </source>
</reference>
<reference key="2">
    <citation type="journal article" date="2011" name="Science">
        <title>Comparative functional genomics of the fission yeasts.</title>
        <authorList>
            <person name="Rhind N."/>
            <person name="Chen Z."/>
            <person name="Yassour M."/>
            <person name="Thompson D.A."/>
            <person name="Haas B.J."/>
            <person name="Habib N."/>
            <person name="Wapinski I."/>
            <person name="Roy S."/>
            <person name="Lin M.F."/>
            <person name="Heiman D.I."/>
            <person name="Young S.K."/>
            <person name="Furuya K."/>
            <person name="Guo Y."/>
            <person name="Pidoux A."/>
            <person name="Chen H.M."/>
            <person name="Robbertse B."/>
            <person name="Goldberg J.M."/>
            <person name="Aoki K."/>
            <person name="Bayne E.H."/>
            <person name="Berlin A.M."/>
            <person name="Desjardins C.A."/>
            <person name="Dobbs E."/>
            <person name="Dukaj L."/>
            <person name="Fan L."/>
            <person name="FitzGerald M.G."/>
            <person name="French C."/>
            <person name="Gujja S."/>
            <person name="Hansen K."/>
            <person name="Keifenheim D."/>
            <person name="Levin J.Z."/>
            <person name="Mosher R.A."/>
            <person name="Mueller C.A."/>
            <person name="Pfiffner J."/>
            <person name="Priest M."/>
            <person name="Russ C."/>
            <person name="Smialowska A."/>
            <person name="Swoboda P."/>
            <person name="Sykes S.M."/>
            <person name="Vaughn M."/>
            <person name="Vengrova S."/>
            <person name="Yoder R."/>
            <person name="Zeng Q."/>
            <person name="Allshire R."/>
            <person name="Baulcombe D."/>
            <person name="Birren B.W."/>
            <person name="Brown W."/>
            <person name="Ekwall K."/>
            <person name="Kellis M."/>
            <person name="Leatherwood J."/>
            <person name="Levin H."/>
            <person name="Margalit H."/>
            <person name="Martienssen R."/>
            <person name="Nieduszynski C.A."/>
            <person name="Spatafora J.W."/>
            <person name="Friedman N."/>
            <person name="Dalgaard J.Z."/>
            <person name="Baumann P."/>
            <person name="Niki H."/>
            <person name="Regev A."/>
            <person name="Nusbaum C."/>
        </authorList>
    </citation>
    <scope>IDENTIFICATION</scope>
</reference>
<reference key="3">
    <citation type="journal article" date="2011" name="Genetics">
        <title>Augmented annotation of the Schizosaccharomyces pombe genome reveals additional genes required for growth and viability.</title>
        <authorList>
            <person name="Bitton D.A."/>
            <person name="Wood V."/>
            <person name="Scutt P.J."/>
            <person name="Grallert A."/>
            <person name="Yates T."/>
            <person name="Smith D.L."/>
            <person name="Hagan I.M."/>
            <person name="Miller C.J."/>
        </authorList>
    </citation>
    <scope>IDENTIFICATION</scope>
</reference>
<comment type="function">
    <text evidence="1">Needed for the assembly of the mitochondrial F1-F0 complex at high temperature.</text>
</comment>
<comment type="subcellular location">
    <subcellularLocation>
        <location evidence="1">Mitochondrion</location>
    </subcellularLocation>
</comment>
<comment type="similarity">
    <text evidence="3">Belongs to the FMC1 family.</text>
</comment>
<evidence type="ECO:0000250" key="1"/>
<evidence type="ECO:0000255" key="2"/>
<evidence type="ECO:0000305" key="3"/>
<protein>
    <recommendedName>
        <fullName>ATP synthase assembly factor fmc1, mitochondrial</fullName>
    </recommendedName>
    <alternativeName>
        <fullName>Formation of mitochondrial complexes protein 1</fullName>
    </alternativeName>
</protein>
<gene>
    <name type="primary">fmc1</name>
    <name type="synonym">new3</name>
    <name type="ORF">SPAC1486.11</name>
</gene>
<proteinExistence type="evidence at transcript level"/>
<feature type="transit peptide" description="Mitochondrion" evidence="2">
    <location>
        <begin position="1"/>
        <end status="unknown"/>
    </location>
</feature>
<feature type="chain" id="PRO_0000416488" description="ATP synthase assembly factor fmc1, mitochondrial">
    <location>
        <begin status="unknown"/>
        <end position="104"/>
    </location>
</feature>
<sequence>MSTPTTVYRSLLRQLREMNVIYKTSTLKQKKGFTKTQKDFLVYTKACLRNNKVEQLSKFQEVVAFLKSGNQHELLFNRHHPLANVNELEKVKLAARRVGLESPE</sequence>
<organism>
    <name type="scientific">Schizosaccharomyces pombe (strain 972 / ATCC 24843)</name>
    <name type="common">Fission yeast</name>
    <dbReference type="NCBI Taxonomy" id="284812"/>
    <lineage>
        <taxon>Eukaryota</taxon>
        <taxon>Fungi</taxon>
        <taxon>Dikarya</taxon>
        <taxon>Ascomycota</taxon>
        <taxon>Taphrinomycotina</taxon>
        <taxon>Schizosaccharomycetes</taxon>
        <taxon>Schizosaccharomycetales</taxon>
        <taxon>Schizosaccharomycetaceae</taxon>
        <taxon>Schizosaccharomyces</taxon>
    </lineage>
</organism>
<dbReference type="EMBL" id="CU329670">
    <property type="protein sequence ID" value="CCD31325.1"/>
    <property type="molecule type" value="Genomic_DNA"/>
</dbReference>
<dbReference type="RefSeq" id="XP_004001780.1">
    <property type="nucleotide sequence ID" value="XM_004001731.1"/>
</dbReference>
<dbReference type="BioGRID" id="4254485">
    <property type="interactions" value="1"/>
</dbReference>
<dbReference type="FunCoup" id="G2TRM0">
    <property type="interactions" value="21"/>
</dbReference>
<dbReference type="PaxDb" id="4896-SPAC1486.11.1"/>
<dbReference type="EnsemblFungi" id="SPAC1486.11.1">
    <property type="protein sequence ID" value="SPAC1486.11.1:pep"/>
    <property type="gene ID" value="SPAC1486.11"/>
</dbReference>
<dbReference type="PomBase" id="SPAC1486.11">
    <property type="gene designation" value="fmc1"/>
</dbReference>
<dbReference type="VEuPathDB" id="FungiDB:SPAC1486.11"/>
<dbReference type="HOGENOM" id="CLU_2251626_0_0_1"/>
<dbReference type="InParanoid" id="G2TRM0"/>
<dbReference type="OMA" id="QYHPLVG"/>
<dbReference type="PRO" id="PR:G2TRM0"/>
<dbReference type="Proteomes" id="UP000002485">
    <property type="component" value="Chromosome I"/>
</dbReference>
<dbReference type="GO" id="GO:0005759">
    <property type="term" value="C:mitochondrial matrix"/>
    <property type="evidence" value="ECO:0000318"/>
    <property type="project" value="GO_Central"/>
</dbReference>
<dbReference type="GO" id="GO:0033615">
    <property type="term" value="P:mitochondrial proton-transporting ATP synthase complex assembly"/>
    <property type="evidence" value="ECO:0000318"/>
    <property type="project" value="GO_Central"/>
</dbReference>
<dbReference type="InterPro" id="IPR039196">
    <property type="entry name" value="Fmc1"/>
</dbReference>
<dbReference type="PANTHER" id="PTHR28015">
    <property type="entry name" value="ATP SYNTHASE ASSEMBLY FACTOR FMC1, MITOCHONDRIAL"/>
    <property type="match status" value="1"/>
</dbReference>
<dbReference type="PANTHER" id="PTHR28015:SF1">
    <property type="entry name" value="ATP SYNTHASE ASSEMBLY FACTOR FMC1, MITOCHONDRIAL"/>
    <property type="match status" value="1"/>
</dbReference>
<dbReference type="Pfam" id="PF13233">
    <property type="entry name" value="Complex1_LYR_2"/>
    <property type="match status" value="1"/>
</dbReference>
<accession>G2TRM0</accession>
<name>FMC1_SCHPO</name>